<organism>
    <name type="scientific">Allorhizobium ampelinum (strain ATCC BAA-846 / DSM 112012 / S4)</name>
    <name type="common">Agrobacterium vitis (strain S4)</name>
    <dbReference type="NCBI Taxonomy" id="311402"/>
    <lineage>
        <taxon>Bacteria</taxon>
        <taxon>Pseudomonadati</taxon>
        <taxon>Pseudomonadota</taxon>
        <taxon>Alphaproteobacteria</taxon>
        <taxon>Hyphomicrobiales</taxon>
        <taxon>Rhizobiaceae</taxon>
        <taxon>Rhizobium/Agrobacterium group</taxon>
        <taxon>Allorhizobium</taxon>
        <taxon>Allorhizobium ampelinum</taxon>
    </lineage>
</organism>
<keyword id="KW-1185">Reference proteome</keyword>
<keyword id="KW-0687">Ribonucleoprotein</keyword>
<keyword id="KW-0689">Ribosomal protein</keyword>
<reference key="1">
    <citation type="journal article" date="2009" name="J. Bacteriol.">
        <title>Genome sequences of three Agrobacterium biovars help elucidate the evolution of multichromosome genomes in bacteria.</title>
        <authorList>
            <person name="Slater S.C."/>
            <person name="Goldman B.S."/>
            <person name="Goodner B."/>
            <person name="Setubal J.C."/>
            <person name="Farrand S.K."/>
            <person name="Nester E.W."/>
            <person name="Burr T.J."/>
            <person name="Banta L."/>
            <person name="Dickerman A.W."/>
            <person name="Paulsen I."/>
            <person name="Otten L."/>
            <person name="Suen G."/>
            <person name="Welch R."/>
            <person name="Almeida N.F."/>
            <person name="Arnold F."/>
            <person name="Burton O.T."/>
            <person name="Du Z."/>
            <person name="Ewing A."/>
            <person name="Godsy E."/>
            <person name="Heisel S."/>
            <person name="Houmiel K.L."/>
            <person name="Jhaveri J."/>
            <person name="Lu J."/>
            <person name="Miller N.M."/>
            <person name="Norton S."/>
            <person name="Chen Q."/>
            <person name="Phoolcharoen W."/>
            <person name="Ohlin V."/>
            <person name="Ondrusek D."/>
            <person name="Pride N."/>
            <person name="Stricklin S.L."/>
            <person name="Sun J."/>
            <person name="Wheeler C."/>
            <person name="Wilson L."/>
            <person name="Zhu H."/>
            <person name="Wood D.W."/>
        </authorList>
    </citation>
    <scope>NUCLEOTIDE SEQUENCE [LARGE SCALE GENOMIC DNA]</scope>
    <source>
        <strain>ATCC BAA-846 / DSM 112012 / S4</strain>
    </source>
</reference>
<evidence type="ECO:0000255" key="1">
    <source>
        <dbReference type="HAMAP-Rule" id="MF_00251"/>
    </source>
</evidence>
<evidence type="ECO:0000305" key="2"/>
<gene>
    <name evidence="1" type="primary">rpmJ</name>
    <name type="ordered locus">Avi_3686</name>
</gene>
<comment type="similarity">
    <text evidence="1">Belongs to the bacterial ribosomal protein bL36 family.</text>
</comment>
<feature type="chain" id="PRO_1000196156" description="Large ribosomal subunit protein bL36">
    <location>
        <begin position="1"/>
        <end position="41"/>
    </location>
</feature>
<dbReference type="EMBL" id="CP000633">
    <property type="protein sequence ID" value="ACM37650.1"/>
    <property type="molecule type" value="Genomic_DNA"/>
</dbReference>
<dbReference type="SMR" id="B9JS22"/>
<dbReference type="STRING" id="311402.Avi_3686"/>
<dbReference type="KEGG" id="avi:Avi_3686"/>
<dbReference type="eggNOG" id="COG0257">
    <property type="taxonomic scope" value="Bacteria"/>
</dbReference>
<dbReference type="HOGENOM" id="CLU_135723_3_2_5"/>
<dbReference type="Proteomes" id="UP000001596">
    <property type="component" value="Chromosome 1"/>
</dbReference>
<dbReference type="GO" id="GO:1990904">
    <property type="term" value="C:ribonucleoprotein complex"/>
    <property type="evidence" value="ECO:0007669"/>
    <property type="project" value="UniProtKB-KW"/>
</dbReference>
<dbReference type="GO" id="GO:0005840">
    <property type="term" value="C:ribosome"/>
    <property type="evidence" value="ECO:0007669"/>
    <property type="project" value="UniProtKB-KW"/>
</dbReference>
<dbReference type="GO" id="GO:0003735">
    <property type="term" value="F:structural constituent of ribosome"/>
    <property type="evidence" value="ECO:0007669"/>
    <property type="project" value="InterPro"/>
</dbReference>
<dbReference type="GO" id="GO:0006412">
    <property type="term" value="P:translation"/>
    <property type="evidence" value="ECO:0007669"/>
    <property type="project" value="UniProtKB-UniRule"/>
</dbReference>
<dbReference type="HAMAP" id="MF_00251">
    <property type="entry name" value="Ribosomal_bL36"/>
    <property type="match status" value="1"/>
</dbReference>
<dbReference type="InterPro" id="IPR000473">
    <property type="entry name" value="Ribosomal_bL36"/>
</dbReference>
<dbReference type="InterPro" id="IPR035977">
    <property type="entry name" value="Ribosomal_bL36_sp"/>
</dbReference>
<dbReference type="InterPro" id="IPR047621">
    <property type="entry name" value="Ribosomal_L36_bact"/>
</dbReference>
<dbReference type="NCBIfam" id="NF002021">
    <property type="entry name" value="PRK00831.1"/>
    <property type="match status" value="1"/>
</dbReference>
<dbReference type="NCBIfam" id="TIGR01022">
    <property type="entry name" value="rpmJ_bact"/>
    <property type="match status" value="1"/>
</dbReference>
<dbReference type="PANTHER" id="PTHR47781">
    <property type="entry name" value="50S RIBOSOMAL PROTEIN L36 2"/>
    <property type="match status" value="1"/>
</dbReference>
<dbReference type="PANTHER" id="PTHR47781:SF1">
    <property type="entry name" value="LARGE RIBOSOMAL SUBUNIT PROTEIN BL36B"/>
    <property type="match status" value="1"/>
</dbReference>
<dbReference type="Pfam" id="PF00444">
    <property type="entry name" value="Ribosomal_L36"/>
    <property type="match status" value="1"/>
</dbReference>
<dbReference type="SUPFAM" id="SSF57840">
    <property type="entry name" value="Ribosomal protein L36"/>
    <property type="match status" value="1"/>
</dbReference>
<dbReference type="PROSITE" id="PS00828">
    <property type="entry name" value="RIBOSOMAL_L36"/>
    <property type="match status" value="1"/>
</dbReference>
<accession>B9JS22</accession>
<name>RL36_ALLAM</name>
<protein>
    <recommendedName>
        <fullName evidence="1">Large ribosomal subunit protein bL36</fullName>
    </recommendedName>
    <alternativeName>
        <fullName evidence="2">50S ribosomal protein L36</fullName>
    </alternativeName>
</protein>
<sequence length="41" mass="4960">MKIKNSLKALKARHRDNRLVRRKGRVYIINKQNPRFKARQG</sequence>
<proteinExistence type="inferred from homology"/>